<proteinExistence type="inferred from homology"/>
<gene>
    <name evidence="1" type="primary">hmuV</name>
    <name type="ordered locus">Pfl01_4798</name>
</gene>
<dbReference type="EC" id="7.6.2.-" evidence="1"/>
<dbReference type="EMBL" id="CP000094">
    <property type="protein sequence ID" value="ABA76535.1"/>
    <property type="molecule type" value="Genomic_DNA"/>
</dbReference>
<dbReference type="RefSeq" id="WP_011335960.1">
    <property type="nucleotide sequence ID" value="NC_007492.2"/>
</dbReference>
<dbReference type="SMR" id="Q3K6R9"/>
<dbReference type="KEGG" id="pfo:Pfl01_4798"/>
<dbReference type="eggNOG" id="COG4559">
    <property type="taxonomic scope" value="Bacteria"/>
</dbReference>
<dbReference type="HOGENOM" id="CLU_000604_1_11_6"/>
<dbReference type="Proteomes" id="UP000002704">
    <property type="component" value="Chromosome"/>
</dbReference>
<dbReference type="GO" id="GO:0005886">
    <property type="term" value="C:plasma membrane"/>
    <property type="evidence" value="ECO:0007669"/>
    <property type="project" value="UniProtKB-SubCell"/>
</dbReference>
<dbReference type="GO" id="GO:0005524">
    <property type="term" value="F:ATP binding"/>
    <property type="evidence" value="ECO:0007669"/>
    <property type="project" value="UniProtKB-KW"/>
</dbReference>
<dbReference type="GO" id="GO:0016887">
    <property type="term" value="F:ATP hydrolysis activity"/>
    <property type="evidence" value="ECO:0007669"/>
    <property type="project" value="InterPro"/>
</dbReference>
<dbReference type="CDD" id="cd03214">
    <property type="entry name" value="ABC_Iron-Siderophores_B12_Hemin"/>
    <property type="match status" value="1"/>
</dbReference>
<dbReference type="Gene3D" id="3.40.50.300">
    <property type="entry name" value="P-loop containing nucleotide triphosphate hydrolases"/>
    <property type="match status" value="1"/>
</dbReference>
<dbReference type="InterPro" id="IPR003593">
    <property type="entry name" value="AAA+_ATPase"/>
</dbReference>
<dbReference type="InterPro" id="IPR003439">
    <property type="entry name" value="ABC_transporter-like_ATP-bd"/>
</dbReference>
<dbReference type="InterPro" id="IPR027417">
    <property type="entry name" value="P-loop_NTPase"/>
</dbReference>
<dbReference type="NCBIfam" id="NF010068">
    <property type="entry name" value="PRK13548.1"/>
    <property type="match status" value="1"/>
</dbReference>
<dbReference type="PANTHER" id="PTHR42794">
    <property type="entry name" value="HEMIN IMPORT ATP-BINDING PROTEIN HMUV"/>
    <property type="match status" value="1"/>
</dbReference>
<dbReference type="PANTHER" id="PTHR42794:SF1">
    <property type="entry name" value="HEMIN IMPORT ATP-BINDING PROTEIN HMUV"/>
    <property type="match status" value="1"/>
</dbReference>
<dbReference type="Pfam" id="PF00005">
    <property type="entry name" value="ABC_tran"/>
    <property type="match status" value="1"/>
</dbReference>
<dbReference type="SMART" id="SM00382">
    <property type="entry name" value="AAA"/>
    <property type="match status" value="1"/>
</dbReference>
<dbReference type="SUPFAM" id="SSF52540">
    <property type="entry name" value="P-loop containing nucleoside triphosphate hydrolases"/>
    <property type="match status" value="1"/>
</dbReference>
<dbReference type="PROSITE" id="PS50893">
    <property type="entry name" value="ABC_TRANSPORTER_2"/>
    <property type="match status" value="1"/>
</dbReference>
<dbReference type="PROSITE" id="PS51261">
    <property type="entry name" value="HMUV"/>
    <property type="match status" value="1"/>
</dbReference>
<evidence type="ECO:0000255" key="1">
    <source>
        <dbReference type="HAMAP-Rule" id="MF_01718"/>
    </source>
</evidence>
<reference key="1">
    <citation type="journal article" date="2009" name="Genome Biol.">
        <title>Genomic and genetic analyses of diversity and plant interactions of Pseudomonas fluorescens.</title>
        <authorList>
            <person name="Silby M.W."/>
            <person name="Cerdeno-Tarraga A.M."/>
            <person name="Vernikos G.S."/>
            <person name="Giddens S.R."/>
            <person name="Jackson R.W."/>
            <person name="Preston G.M."/>
            <person name="Zhang X.-X."/>
            <person name="Moon C.D."/>
            <person name="Gehrig S.M."/>
            <person name="Godfrey S.A.C."/>
            <person name="Knight C.G."/>
            <person name="Malone J.G."/>
            <person name="Robinson Z."/>
            <person name="Spiers A.J."/>
            <person name="Harris S."/>
            <person name="Challis G.L."/>
            <person name="Yaxley A.M."/>
            <person name="Harris D."/>
            <person name="Seeger K."/>
            <person name="Murphy L."/>
            <person name="Rutter S."/>
            <person name="Squares R."/>
            <person name="Quail M.A."/>
            <person name="Saunders E."/>
            <person name="Mavromatis K."/>
            <person name="Brettin T.S."/>
            <person name="Bentley S.D."/>
            <person name="Hothersall J."/>
            <person name="Stephens E."/>
            <person name="Thomas C.M."/>
            <person name="Parkhill J."/>
            <person name="Levy S.B."/>
            <person name="Rainey P.B."/>
            <person name="Thomson N.R."/>
        </authorList>
    </citation>
    <scope>NUCLEOTIDE SEQUENCE [LARGE SCALE GENOMIC DNA]</scope>
    <source>
        <strain>Pf0-1</strain>
    </source>
</reference>
<accession>Q3K6R9</accession>
<name>HMUV_PSEPF</name>
<protein>
    <recommendedName>
        <fullName evidence="1">Hemin import ATP-binding protein HmuV</fullName>
        <ecNumber evidence="1">7.6.2.-</ecNumber>
    </recommendedName>
</protein>
<organism>
    <name type="scientific">Pseudomonas fluorescens (strain Pf0-1)</name>
    <dbReference type="NCBI Taxonomy" id="205922"/>
    <lineage>
        <taxon>Bacteria</taxon>
        <taxon>Pseudomonadati</taxon>
        <taxon>Pseudomonadota</taxon>
        <taxon>Gammaproteobacteria</taxon>
        <taxon>Pseudomonadales</taxon>
        <taxon>Pseudomonadaceae</taxon>
        <taxon>Pseudomonas</taxon>
    </lineage>
</organism>
<comment type="function">
    <text evidence="1">Part of the ABC transporter complex HmuTUV involved in hemin import. Responsible for energy coupling to the transport system.</text>
</comment>
<comment type="subunit">
    <text evidence="1">The complex is composed of two ATP-binding proteins (HmuV), two transmembrane proteins (HmuU) and a solute-binding protein (HmuT).</text>
</comment>
<comment type="subcellular location">
    <subcellularLocation>
        <location evidence="1">Cell inner membrane</location>
        <topology evidence="1">Peripheral membrane protein</topology>
    </subcellularLocation>
</comment>
<comment type="similarity">
    <text evidence="1">Belongs to the ABC transporter superfamily. Heme (hemin) importer (TC 3.A.1.14.5) family.</text>
</comment>
<feature type="chain" id="PRO_0000269612" description="Hemin import ATP-binding protein HmuV">
    <location>
        <begin position="1"/>
        <end position="255"/>
    </location>
</feature>
<feature type="domain" description="ABC transporter" evidence="1">
    <location>
        <begin position="2"/>
        <end position="238"/>
    </location>
</feature>
<feature type="binding site" evidence="1">
    <location>
        <begin position="34"/>
        <end position="41"/>
    </location>
    <ligand>
        <name>ATP</name>
        <dbReference type="ChEBI" id="CHEBI:30616"/>
    </ligand>
</feature>
<sequence length="255" mass="27619">MLRAHNLHIRRGRKTVLADVSLQLEPGEVLGVLGPNGAGKSTLLGALCGELSAHEGDVLLDGEALSRWSGTQRAQRLAVLPQVSTLDFAFRVEEVVGMGRLPYQSGRVRDDEIVAAALRAADAGHLSGRSYLALSGGERQRVHLARVLAQLWPGQAGQTLLLDEPTSMLDPLHQHTTLQAVREFADRGAAVLVILHDLNLAARYCDRILLLEGGRPVALDTPQQVLRPESLKAVFGLEVLVQTHPERGHPLIIAR</sequence>
<keyword id="KW-0067">ATP-binding</keyword>
<keyword id="KW-0997">Cell inner membrane</keyword>
<keyword id="KW-1003">Cell membrane</keyword>
<keyword id="KW-0472">Membrane</keyword>
<keyword id="KW-0547">Nucleotide-binding</keyword>
<keyword id="KW-1278">Translocase</keyword>
<keyword id="KW-0813">Transport</keyword>